<geneLocation type="chloroplast"/>
<proteinExistence type="inferred from homology"/>
<gene>
    <name evidence="1" type="primary">ycf2-A</name>
</gene>
<gene>
    <name evidence="1" type="primary">ycf2-B</name>
</gene>
<keyword id="KW-0067">ATP-binding</keyword>
<keyword id="KW-0150">Chloroplast</keyword>
<keyword id="KW-0547">Nucleotide-binding</keyword>
<keyword id="KW-0934">Plastid</keyword>
<accession>Q0G9F7</accession>
<name>YCF2_LIRTU</name>
<organism>
    <name type="scientific">Liriodendron tulipifera</name>
    <name type="common">Tuliptree</name>
    <name type="synonym">Tulip poplar</name>
    <dbReference type="NCBI Taxonomy" id="3415"/>
    <lineage>
        <taxon>Eukaryota</taxon>
        <taxon>Viridiplantae</taxon>
        <taxon>Streptophyta</taxon>
        <taxon>Embryophyta</taxon>
        <taxon>Tracheophyta</taxon>
        <taxon>Spermatophyta</taxon>
        <taxon>Magnoliopsida</taxon>
        <taxon>Magnoliidae</taxon>
        <taxon>Magnoliales</taxon>
        <taxon>Magnoliaceae</taxon>
        <taxon>Liriodendron</taxon>
    </lineage>
</organism>
<comment type="function">
    <text>Probable ATPase of unknown function. Its presence in a non-photosynthetic plant (Epifagus virginiana) and experiments in tobacco indicate that it has an essential function which is probably not related to photosynthesis.</text>
</comment>
<comment type="subcellular location">
    <subcellularLocation>
        <location evidence="1">Plastid</location>
        <location evidence="1">Chloroplast stroma</location>
    </subcellularLocation>
</comment>
<comment type="similarity">
    <text evidence="1">Belongs to the Ycf2 family.</text>
</comment>
<evidence type="ECO:0000255" key="1">
    <source>
        <dbReference type="HAMAP-Rule" id="MF_01330"/>
    </source>
</evidence>
<dbReference type="EMBL" id="DQ899947">
    <property type="protein sequence ID" value="ABI32552.1"/>
    <property type="molecule type" value="Genomic_DNA"/>
</dbReference>
<dbReference type="EMBL" id="DQ899947">
    <property type="protein sequence ID" value="ABI32572.1"/>
    <property type="molecule type" value="Genomic_DNA"/>
</dbReference>
<dbReference type="GO" id="GO:0009570">
    <property type="term" value="C:chloroplast stroma"/>
    <property type="evidence" value="ECO:0007669"/>
    <property type="project" value="UniProtKB-SubCell"/>
</dbReference>
<dbReference type="GO" id="GO:0005524">
    <property type="term" value="F:ATP binding"/>
    <property type="evidence" value="ECO:0007669"/>
    <property type="project" value="UniProtKB-KW"/>
</dbReference>
<dbReference type="GO" id="GO:0016887">
    <property type="term" value="F:ATP hydrolysis activity"/>
    <property type="evidence" value="ECO:0007669"/>
    <property type="project" value="InterPro"/>
</dbReference>
<dbReference type="CDD" id="cd19505">
    <property type="entry name" value="RecA-like_Ycf2"/>
    <property type="match status" value="1"/>
</dbReference>
<dbReference type="Gene3D" id="3.40.50.300">
    <property type="entry name" value="P-loop containing nucleotide triphosphate hydrolases"/>
    <property type="match status" value="1"/>
</dbReference>
<dbReference type="HAMAP" id="MF_01330">
    <property type="entry name" value="Ycf2"/>
    <property type="match status" value="1"/>
</dbReference>
<dbReference type="InterPro" id="IPR003959">
    <property type="entry name" value="ATPase_AAA_core"/>
</dbReference>
<dbReference type="InterPro" id="IPR027417">
    <property type="entry name" value="P-loop_NTPase"/>
</dbReference>
<dbReference type="InterPro" id="IPR008543">
    <property type="entry name" value="Uncharacterised_Ycf2"/>
</dbReference>
<dbReference type="InterPro" id="IPR056777">
    <property type="entry name" value="Ycf2_N"/>
</dbReference>
<dbReference type="PANTHER" id="PTHR33078:SF51">
    <property type="entry name" value="PROTEIN TIC 214"/>
    <property type="match status" value="1"/>
</dbReference>
<dbReference type="PANTHER" id="PTHR33078">
    <property type="entry name" value="PROTEIN YCF2-RELATED"/>
    <property type="match status" value="1"/>
</dbReference>
<dbReference type="Pfam" id="PF00004">
    <property type="entry name" value="AAA"/>
    <property type="match status" value="1"/>
</dbReference>
<dbReference type="Pfam" id="PF05695">
    <property type="entry name" value="Ycf2"/>
    <property type="match status" value="1"/>
</dbReference>
<dbReference type="SUPFAM" id="SSF52540">
    <property type="entry name" value="P-loop containing nucleoside triphosphate hydrolases"/>
    <property type="match status" value="1"/>
</dbReference>
<sequence>MKRHQFKSWIFELREIKNSHYFLDSWTKFDSVGSFTHIFFHQERFMKLFDPRIWSILLSRDSQGSTSNRYFTIKGVVLLVVAVLIYRINNRNMVERKNLYLMGLLPIPILPIPMNSIGPRNDTLEESFWSSNINRLIVSLLYLPKGKKISESCFMDPKESTWVLPITKKCIMPESNWGSRWWRNRIGKKRDSSCKISNETVAGIEISFKEKDIKYLEFLFVSYTDDPIRKDLDWEFFDRLSPRKKRNIINLNSGQLFEILVKHLICYLMSAFREKRPIEVEGFFKQQGAEATIQSNDIEHVSHLFSRNKWGISLQNCAQFHMWQFRQDLFVSWGKNQHESDFLRNVSRENWIWLDNVWLVNKDWFFSKVRNVSSNIQYDSTRSIFVQVTDSSQLKGSSDQSRDPFDSISNEDSEYHTLINQTEIQQLKERSILWDPSFLQTERTEIESDRFPKCLSGYSSMSRLFTEREKQMNNHLLPEEIEEFLGNPTRSIRSFFSDRWSELHLGSNPTERSTRDQKLLKKQQDVSFVPSRRSENKEMVDIFKIITYLQNTVSIHPISSDPGCDMVPKDEPDMGSSNKISFLNKNPFLDLFHLFHDRNKGGYTLHHDFESEERFQEMADLFTLSITEPDLVYHKGFAFSIDSYGLDQKKFLNEVFNSRDESKKKSLWVLPPIFDEENESFYRRIRKKSVRISCGNDLEDPKPKIVVFASNNIMEAVNQYRLIRNLIQIQYSTYGYIRNVSNRFFLMNRSDRNFEYGIQRDQIGNDTLNHLTRIKYTINQHLSNLKKSQKKWFDPLISRTERSMNRDPDAYRYKWSNGSKNFQEHLEHFVSEQKHRFQVVFDRLRINQYSIDWSEVIDKQDLSKSLRFFLSKSLLFLSKSLLFLSKSLPFFFVSIGNIPIHRSEIHIYELKVPNDQLCNQLLESIGVQIVHLNKLKPFLLDDHDTSQRSKFLINGGTISPFLFNKIPKWMIDSFHTRNNRRKSFDNTDSYFSMISRDRDNWLNPVKPFHRSSLISSFYKANRLRFLNNPHHFWFYCNKRFPFYVEKTRINNYDLTYGQFLNILFIRNKIFSLCVGKKKHVFLERDTISPIESQVSDIFIPNDFPQSGGETYNLYKSFHFPIRSDPFVRRAIYSIADISGTPLTEEQIVNFERTYCQPLSDMNLSDSEGKNLHQYLSFNSNMGLIHTPCSEKDLPSGKRKKRSLCLKKCVEKRQMYRTFQRDSAFSNLSKWNLFQTYMPWFLTSTGCKYLNFTLLDTFSDPLPILSSSQKFVSIFHDIMHGSDISWPIPQKKLWAILPQWNLISEISSKCLQNLLLSEEMIHRNNESPVPLIWTHLRSPNAREFLYSILFLLLVAGYLVRTHLLFVSRASSELQTELEKIKSLMIPSYMIELRKLLDRYPTSELNSFWLKNLFLVALEQLGDSLEEIRGSASGGNMLLGGGPAYGVKSIRSKKKYLNINLIDLISIIPNPINRITFSRNTRHLSRTSKEIYSLIRKRKNVNGDWIDDKIESWVANSDSIDDEEREFLVQFSTLTTEKRIDQILLSLTHSDHLSKNDSGYQMIEQPGSIYLRYLVDIHKKYLMNYEFNRSCLAERRIFLAHYQTITYSQTSCGANSSHFPSHGKPFSLRLALSPSRGILVIGSIGIGRSYLVKYLATNSYVPFITVFPNKFLDDKPKGYLIDDIDIDDSDDIDIDDSDDIDDDLDTELLTMTNVLTMYMTPKIDRFDITPQLELAKAMSPCIIWIPNIHDLYVNESNYLSLGLLVNYLSRDCERCSTRNILVIASTHIPKKVDPALIAPNKLNTCIKIRRLLIPQQRKHFFILSYTRGFHLEKKMFHTNGFGSMTMGSNARDLVALTNEALSISITQKKSIIDTNTIRSALHRQTWDLRSQVRSVQDHGILFYQIGRAVAQNVLLSNCPIDPISIYMKKKSCKEGDSYLYKWYFELGTSMKKLTILLYLLSCSAGSVAQDLWSPPGPDEKNGITSYGFVENDSDLVHGLLEVEGALVGSSRTEKDCSQFDNDRVTLLLRSEPRNQLDMMQNGSCSIVDQRFLYEKYESEFEGGEGEGALDPQQIEEDLFNHIVWAPRIWRPCGNLFDCIERTNELGFPYWARSFRGKRIIYHKEDELQENDSEFLQSGTMQYQTRDRSSKEQGFFRISQFVWDPADPFFFLFKDQPFVSVFSRREFFADEEMSKGLITSQTNPPTSIYKRWFIKNTQEKHFELLIHRQRWLRTNSSLSNGSFRSNTPSESYQYLSNLFLSNGTLLDQMTKALLRKRWLFPDEMKHLIHVRFPIP</sequence>
<reference key="1">
    <citation type="journal article" date="2006" name="BMC Evol. Biol.">
        <title>Complete plastid genome sequences of Drimys, Liriodendron, and Piper: implications for the phylogenetic relationships of magnoliids.</title>
        <authorList>
            <person name="Cai Z."/>
            <person name="Penaflor C."/>
            <person name="Kuehl J.V."/>
            <person name="Leebens-Mack J."/>
            <person name="Carlson J.E."/>
            <person name="dePamphilis C.W."/>
            <person name="Boore J.L."/>
            <person name="Jansen R.K."/>
        </authorList>
    </citation>
    <scope>NUCLEOTIDE SEQUENCE [LARGE SCALE GENOMIC DNA]</scope>
</reference>
<protein>
    <recommendedName>
        <fullName evidence="1">Protein Ycf2</fullName>
    </recommendedName>
</protein>
<feature type="chain" id="PRO_0000276553" description="Protein Ycf2">
    <location>
        <begin position="1"/>
        <end position="2292"/>
    </location>
</feature>
<feature type="binding site" evidence="1">
    <location>
        <begin position="1640"/>
        <end position="1647"/>
    </location>
    <ligand>
        <name>ATP</name>
        <dbReference type="ChEBI" id="CHEBI:30616"/>
    </ligand>
</feature>